<proteinExistence type="inferred from homology"/>
<reference key="1">
    <citation type="journal article" date="2006" name="J. Bacteriol.">
        <title>Living with genome instability: the adaptation of phytoplasmas to diverse environments of their insect and plant hosts.</title>
        <authorList>
            <person name="Bai X."/>
            <person name="Zhang J."/>
            <person name="Ewing A."/>
            <person name="Miller S.A."/>
            <person name="Jancso Radek A."/>
            <person name="Shevchenko D.V."/>
            <person name="Tsukerman K."/>
            <person name="Walunas T."/>
            <person name="Lapidus A."/>
            <person name="Campbell J.W."/>
            <person name="Hogenhout S.A."/>
        </authorList>
    </citation>
    <scope>NUCLEOTIDE SEQUENCE [LARGE SCALE GENOMIC DNA]</scope>
    <source>
        <strain>AYWB</strain>
    </source>
</reference>
<protein>
    <recommendedName>
        <fullName evidence="1">Elongation factor P</fullName>
        <shortName evidence="1">EF-P</shortName>
    </recommendedName>
</protein>
<comment type="function">
    <text evidence="1">Involved in peptide bond synthesis. Stimulates efficient translation and peptide-bond synthesis on native or reconstituted 70S ribosomes in vitro. Probably functions indirectly by altering the affinity of the ribosome for aminoacyl-tRNA, thus increasing their reactivity as acceptors for peptidyl transferase.</text>
</comment>
<comment type="pathway">
    <text evidence="1">Protein biosynthesis; polypeptide chain elongation.</text>
</comment>
<comment type="subcellular location">
    <subcellularLocation>
        <location evidence="1">Cytoplasm</location>
    </subcellularLocation>
</comment>
<comment type="similarity">
    <text evidence="1">Belongs to the elongation factor P family.</text>
</comment>
<name>EFP_AYWBP</name>
<gene>
    <name evidence="1" type="primary">efp</name>
    <name type="ordered locus">AYWB_445</name>
</gene>
<organism>
    <name type="scientific">Aster yellows witches'-broom phytoplasma (strain AYWB)</name>
    <dbReference type="NCBI Taxonomy" id="322098"/>
    <lineage>
        <taxon>Bacteria</taxon>
        <taxon>Bacillati</taxon>
        <taxon>Mycoplasmatota</taxon>
        <taxon>Mollicutes</taxon>
        <taxon>Acholeplasmatales</taxon>
        <taxon>Acholeplasmataceae</taxon>
        <taxon>Candidatus Phytoplasma</taxon>
        <taxon>16SrI (Aster yellows group)</taxon>
    </lineage>
</organism>
<feature type="chain" id="PRO_1000010679" description="Elongation factor P">
    <location>
        <begin position="1"/>
        <end position="189"/>
    </location>
</feature>
<sequence>MINTNDFKTGKTIKFNNQIYQILEFLHVKPGKGSAFVRTKLRNLRTGSVIDYTFNAGIKVQPALITKIKMQLIYVLEDNYIFMNTQNYEQLEINKYQLKDFLKYLYEGLLVDIIFYENDEIVGISLPEKISIKVAYTEPGAKGDTKTNSLKDATLETGLVIKVPLFINIGEKIIINTETGLYLSRDNNK</sequence>
<evidence type="ECO:0000255" key="1">
    <source>
        <dbReference type="HAMAP-Rule" id="MF_00141"/>
    </source>
</evidence>
<dbReference type="EMBL" id="CP000061">
    <property type="protein sequence ID" value="ABC65562.1"/>
    <property type="molecule type" value="Genomic_DNA"/>
</dbReference>
<dbReference type="RefSeq" id="WP_011412726.1">
    <property type="nucleotide sequence ID" value="NC_007716.1"/>
</dbReference>
<dbReference type="SMR" id="Q2NJ31"/>
<dbReference type="STRING" id="322098.AYWB_445"/>
<dbReference type="KEGG" id="ayw:AYWB_445"/>
<dbReference type="eggNOG" id="COG0231">
    <property type="taxonomic scope" value="Bacteria"/>
</dbReference>
<dbReference type="HOGENOM" id="CLU_074944_0_1_14"/>
<dbReference type="OrthoDB" id="9801844at2"/>
<dbReference type="PhylomeDB" id="Q2NJ31"/>
<dbReference type="UniPathway" id="UPA00345"/>
<dbReference type="Proteomes" id="UP000001934">
    <property type="component" value="Chromosome"/>
</dbReference>
<dbReference type="GO" id="GO:0005737">
    <property type="term" value="C:cytoplasm"/>
    <property type="evidence" value="ECO:0007669"/>
    <property type="project" value="UniProtKB-SubCell"/>
</dbReference>
<dbReference type="GO" id="GO:0003746">
    <property type="term" value="F:translation elongation factor activity"/>
    <property type="evidence" value="ECO:0007669"/>
    <property type="project" value="UniProtKB-UniRule"/>
</dbReference>
<dbReference type="GO" id="GO:0043043">
    <property type="term" value="P:peptide biosynthetic process"/>
    <property type="evidence" value="ECO:0007669"/>
    <property type="project" value="InterPro"/>
</dbReference>
<dbReference type="CDD" id="cd04470">
    <property type="entry name" value="S1_EF-P_repeat_1"/>
    <property type="match status" value="1"/>
</dbReference>
<dbReference type="CDD" id="cd05794">
    <property type="entry name" value="S1_EF-P_repeat_2"/>
    <property type="match status" value="1"/>
</dbReference>
<dbReference type="FunFam" id="2.30.30.30:FF:000003">
    <property type="entry name" value="Elongation factor P"/>
    <property type="match status" value="1"/>
</dbReference>
<dbReference type="FunFam" id="2.40.50.140:FF:000004">
    <property type="entry name" value="Elongation factor P"/>
    <property type="match status" value="1"/>
</dbReference>
<dbReference type="Gene3D" id="2.30.30.30">
    <property type="match status" value="1"/>
</dbReference>
<dbReference type="Gene3D" id="2.40.50.140">
    <property type="entry name" value="Nucleic acid-binding proteins"/>
    <property type="match status" value="2"/>
</dbReference>
<dbReference type="HAMAP" id="MF_00141">
    <property type="entry name" value="EF_P"/>
    <property type="match status" value="1"/>
</dbReference>
<dbReference type="InterPro" id="IPR015365">
    <property type="entry name" value="Elong-fact-P_C"/>
</dbReference>
<dbReference type="InterPro" id="IPR012340">
    <property type="entry name" value="NA-bd_OB-fold"/>
</dbReference>
<dbReference type="InterPro" id="IPR014722">
    <property type="entry name" value="Rib_uL2_dom2"/>
</dbReference>
<dbReference type="InterPro" id="IPR020599">
    <property type="entry name" value="Transl_elong_fac_P/YeiP"/>
</dbReference>
<dbReference type="InterPro" id="IPR013185">
    <property type="entry name" value="Transl_elong_KOW-like"/>
</dbReference>
<dbReference type="InterPro" id="IPR001059">
    <property type="entry name" value="Transl_elong_P/YeiP_cen"/>
</dbReference>
<dbReference type="InterPro" id="IPR013852">
    <property type="entry name" value="Transl_elong_P/YeiP_CS"/>
</dbReference>
<dbReference type="InterPro" id="IPR011768">
    <property type="entry name" value="Transl_elongation_fac_P"/>
</dbReference>
<dbReference type="InterPro" id="IPR008991">
    <property type="entry name" value="Translation_prot_SH3-like_sf"/>
</dbReference>
<dbReference type="NCBIfam" id="TIGR00038">
    <property type="entry name" value="efp"/>
    <property type="match status" value="1"/>
</dbReference>
<dbReference type="NCBIfam" id="NF001810">
    <property type="entry name" value="PRK00529.1"/>
    <property type="match status" value="1"/>
</dbReference>
<dbReference type="PANTHER" id="PTHR30053">
    <property type="entry name" value="ELONGATION FACTOR P"/>
    <property type="match status" value="1"/>
</dbReference>
<dbReference type="PANTHER" id="PTHR30053:SF12">
    <property type="entry name" value="ELONGATION FACTOR P (EF-P) FAMILY PROTEIN"/>
    <property type="match status" value="1"/>
</dbReference>
<dbReference type="Pfam" id="PF01132">
    <property type="entry name" value="EFP"/>
    <property type="match status" value="1"/>
</dbReference>
<dbReference type="Pfam" id="PF08207">
    <property type="entry name" value="EFP_N"/>
    <property type="match status" value="1"/>
</dbReference>
<dbReference type="Pfam" id="PF09285">
    <property type="entry name" value="Elong-fact-P_C"/>
    <property type="match status" value="1"/>
</dbReference>
<dbReference type="PIRSF" id="PIRSF005901">
    <property type="entry name" value="EF-P"/>
    <property type="match status" value="1"/>
</dbReference>
<dbReference type="SMART" id="SM01185">
    <property type="entry name" value="EFP"/>
    <property type="match status" value="1"/>
</dbReference>
<dbReference type="SMART" id="SM00841">
    <property type="entry name" value="Elong-fact-P_C"/>
    <property type="match status" value="1"/>
</dbReference>
<dbReference type="SUPFAM" id="SSF50249">
    <property type="entry name" value="Nucleic acid-binding proteins"/>
    <property type="match status" value="2"/>
</dbReference>
<dbReference type="SUPFAM" id="SSF50104">
    <property type="entry name" value="Translation proteins SH3-like domain"/>
    <property type="match status" value="1"/>
</dbReference>
<dbReference type="PROSITE" id="PS01275">
    <property type="entry name" value="EFP"/>
    <property type="match status" value="1"/>
</dbReference>
<keyword id="KW-0963">Cytoplasm</keyword>
<keyword id="KW-0251">Elongation factor</keyword>
<keyword id="KW-0648">Protein biosynthesis</keyword>
<accession>Q2NJ31</accession>